<evidence type="ECO:0000250" key="1">
    <source>
        <dbReference type="UniProtKB" id="O35240"/>
    </source>
</evidence>
<evidence type="ECO:0000250" key="2">
    <source>
        <dbReference type="UniProtKB" id="P78348"/>
    </source>
</evidence>
<evidence type="ECO:0000250" key="3">
    <source>
        <dbReference type="UniProtKB" id="Q6X1Y6"/>
    </source>
</evidence>
<evidence type="ECO:0000255" key="4"/>
<evidence type="ECO:0000256" key="5">
    <source>
        <dbReference type="SAM" id="MobiDB-lite"/>
    </source>
</evidence>
<evidence type="ECO:0000269" key="6">
    <source>
    </source>
</evidence>
<evidence type="ECO:0000269" key="7">
    <source>
    </source>
</evidence>
<evidence type="ECO:0000269" key="8">
    <source>
    </source>
</evidence>
<evidence type="ECO:0000269" key="9">
    <source>
    </source>
</evidence>
<evidence type="ECO:0000269" key="10">
    <source>
    </source>
</evidence>
<evidence type="ECO:0000269" key="11">
    <source>
    </source>
</evidence>
<evidence type="ECO:0000269" key="12">
    <source>
    </source>
</evidence>
<evidence type="ECO:0000303" key="13">
    <source>
    </source>
</evidence>
<evidence type="ECO:0000303" key="14">
    <source>
    </source>
</evidence>
<evidence type="ECO:0000303" key="15">
    <source>
    </source>
</evidence>
<evidence type="ECO:0000303" key="16">
    <source>
    </source>
</evidence>
<evidence type="ECO:0000303" key="17">
    <source>
    </source>
</evidence>
<evidence type="ECO:0000303" key="18">
    <source ref="4"/>
</evidence>
<evidence type="ECO:0000303" key="19">
    <source ref="6"/>
</evidence>
<evidence type="ECO:0000305" key="20"/>
<evidence type="ECO:0000305" key="21">
    <source>
    </source>
</evidence>
<evidence type="ECO:0000305" key="22">
    <source>
    </source>
</evidence>
<evidence type="ECO:0000312" key="23">
    <source>
        <dbReference type="HGNC" id="HGNC:101"/>
    </source>
</evidence>
<feature type="chain" id="PRO_0000181301" description="Acid-sensing ion channel 3">
    <location>
        <begin position="1"/>
        <end position="531"/>
    </location>
</feature>
<feature type="topological domain" description="Cytoplasmic" evidence="22">
    <location>
        <begin position="1"/>
        <end position="43"/>
    </location>
</feature>
<feature type="transmembrane region" description="Helical" evidence="4">
    <location>
        <begin position="44"/>
        <end position="61"/>
    </location>
</feature>
<feature type="topological domain" description="Extracellular" evidence="22">
    <location>
        <begin position="62"/>
        <end position="441"/>
    </location>
</feature>
<feature type="transmembrane region" description="Helical" evidence="4">
    <location>
        <begin position="442"/>
        <end position="460"/>
    </location>
</feature>
<feature type="topological domain" description="Cytoplasmic" evidence="22">
    <location>
        <begin position="461"/>
        <end position="531"/>
    </location>
</feature>
<feature type="region of interest" description="Disordered" evidence="5">
    <location>
        <begin position="285"/>
        <end position="307"/>
    </location>
</feature>
<feature type="short sequence motif" description="GAS motif; ion selectivity filter" evidence="2">
    <location>
        <begin position="447"/>
        <end position="449"/>
    </location>
</feature>
<feature type="short sequence motif" description="PDZ-binding" evidence="9">
    <location>
        <begin position="528"/>
        <end position="531"/>
    </location>
</feature>
<feature type="glycosylation site" description="N-linked (GlcNAc...) asparagine" evidence="4">
    <location>
        <position position="175"/>
    </location>
</feature>
<feature type="glycosylation site" description="N-linked (GlcNAc...) asparagine" evidence="4">
    <location>
        <position position="398"/>
    </location>
</feature>
<feature type="disulfide bond" evidence="2">
    <location>
        <begin position="92"/>
        <end position="186"/>
    </location>
</feature>
<feature type="disulfide bond" evidence="2">
    <location>
        <begin position="164"/>
        <end position="171"/>
    </location>
</feature>
<feature type="disulfide bond" evidence="2">
    <location>
        <begin position="282"/>
        <end position="370"/>
    </location>
</feature>
<feature type="disulfide bond" evidence="2">
    <location>
        <begin position="315"/>
        <end position="366"/>
    </location>
</feature>
<feature type="disulfide bond" evidence="2">
    <location>
        <begin position="319"/>
        <end position="364"/>
    </location>
</feature>
<feature type="disulfide bond" evidence="2">
    <location>
        <begin position="328"/>
        <end position="350"/>
    </location>
</feature>
<feature type="disulfide bond" evidence="2">
    <location>
        <begin position="330"/>
        <end position="342"/>
    </location>
</feature>
<feature type="splice variant" id="VSP_015600" description="In isoform 4." evidence="19">
    <original>DAMLRKDSCACPNPCASTRYAKELSMVRIPSRAAARFLARKLNRSEAYIAEN</original>
    <variation>GRTCWPWTSSLRPSTMRPWSRRRPMRCQSCLVTLGARWGCSSGPACSPSSRS</variation>
    <location>
        <begin position="356"/>
        <end position="407"/>
    </location>
</feature>
<feature type="splice variant" id="VSP_015601" description="In isoform 4." evidence="19">
    <location>
        <begin position="408"/>
        <end position="531"/>
    </location>
</feature>
<feature type="splice variant" id="VSP_015602" description="In isoform 2." evidence="14 18">
    <original>LQEGLGSHRTQVPHLSLGPRPPTPPCAVTKTLSASHRTCYLVTQL</original>
    <variation>TSHPSLCRHQDSLRLPPHLLPCHTALDLLSVSSEPRPDILDMPSLHVAFPSSPQIKS</variation>
    <location>
        <begin position="487"/>
        <end position="531"/>
    </location>
</feature>
<feature type="splice variant" id="VSP_015603" description="In isoform 3." evidence="18">
    <original>RPPTPPCAVTKTLSASHRTCYLVTQL</original>
    <variation>STLLCSEDLPPLPVPSPRLSPPPTAPATLSHSSRPAVCVLGAPP</variation>
    <location>
        <begin position="506"/>
        <end position="531"/>
    </location>
</feature>
<feature type="sequence variant" id="VAR_052037" description="In dbSNP:rs1864545.">
    <original>N</original>
    <variation>S</variation>
    <location>
        <position position="228"/>
    </location>
</feature>
<feature type="mutagenesis site" description="No effect on interaction with LIN7B. No effect on interaction with MAGI1. No effect on interaction with GOPC." evidence="9">
    <original>V</original>
    <variation>A</variation>
    <location>
        <position position="528"/>
    </location>
</feature>
<feature type="mutagenesis site" description="Loss of interaction with LIN7B. Loss of interaction with MAGI1." evidence="9">
    <original>T</original>
    <variation>A</variation>
    <location>
        <position position="529"/>
    </location>
</feature>
<feature type="mutagenesis site" description="Loss of interaction with GOPC. No effect on interaction with LIN7B. NO effect on interaction with MAGI1." evidence="9">
    <original>Q</original>
    <variation>A</variation>
    <location>
        <position position="530"/>
    </location>
</feature>
<feature type="mutagenesis site" description="Loss of interaction with LIN7B. Loss of interaction with MAGI1. Loss of interaction with GOPC." evidence="9">
    <original>L</original>
    <variation>A</variation>
    <location>
        <position position="531"/>
    </location>
</feature>
<feature type="sequence conflict" description="In Ref. 1; BAA25897 and 3; AAC62935." evidence="20" ref="1 3">
    <original>P</original>
    <variation>Q</variation>
    <location>
        <position position="13"/>
    </location>
</feature>
<feature type="sequence conflict" description="In Ref. 3; AAC62935." evidence="20" ref="3">
    <original>A</original>
    <variation>P</variation>
    <location>
        <position position="14"/>
    </location>
</feature>
<feature type="sequence conflict" description="In Ref. 3; AAC62935." evidence="20" ref="3">
    <original>I</original>
    <variation>V</variation>
    <location>
        <position position="85"/>
    </location>
</feature>
<feature type="sequence conflict" description="In Ref. 1; BAA25897." evidence="20" ref="1">
    <original>SQ</original>
    <variation>GH</variation>
    <location>
        <begin position="243"/>
        <end position="244"/>
    </location>
</feature>
<feature type="sequence conflict" description="In Ref. 3; AAC62935." evidence="20" ref="3">
    <original>M</original>
    <variation>I</variation>
    <location>
        <position position="358"/>
    </location>
</feature>
<feature type="sequence conflict" description="In Ref. 1; BAA25897." evidence="20" ref="1">
    <original>L</original>
    <variation>F</variation>
    <location>
        <position position="397"/>
    </location>
</feature>
<feature type="sequence conflict" description="In Ref. 1; BAA25897." evidence="20" ref="1">
    <original>S</original>
    <variation>R</variation>
    <location>
        <position position="400"/>
    </location>
</feature>
<feature type="sequence conflict" description="In Ref. 1; BAA25897." evidence="20" ref="1">
    <original>L</original>
    <variation>F</variation>
    <location>
        <position position="518"/>
    </location>
</feature>
<sequence length="531" mass="58905">MKPTSGPEEARRPASDIRVFASNCSMHGLGHVFGPGSLSLRRGMWAAAVVLSVATFLYQVAERVRYYREFHHQTALDERESHRLIFPAVTLCNINPLRRSRLTPNDLHWAGSALLGLDPAEHAAFLRALGRPPAPPGFMPSPTFDMAQLYARAGHSLDDMLLDCRFRGQPCGPENFTTIFTRMGKCYTFNSGADGAELLTTTRGGMGNGLDIMLDVQQEEYLPVWRDNEETPFEVGIRVQIHSQEEPPIIDQLGLGVSPGYQTFVSCQQQQLSFLPPPWGDCSSASLNPNYEPEPSDPLGSPSPSPSPPYTLMGCRLACETRYVARKCGCRMVYMPGDVPVCSPQQYKNCAHPAIDAMLRKDSCACPNPCASTRYAKELSMVRIPSRAAARFLARKLNRSEAYIAENVLALDIFFEALNYETVEQKKAYEMSELLGDIGGQMGLFIGASLLTILEILDYLCEVFRDKVLGYFWNRQHSQRHSSTNLLQEGLGSHRTQVPHLSLGPRPPTPPCAVTKTLSASHRTCYLVTQL</sequence>
<dbReference type="EMBL" id="AB010575">
    <property type="protein sequence ID" value="BAA25897.1"/>
    <property type="status" value="ALT_FRAME"/>
    <property type="molecule type" value="mRNA"/>
</dbReference>
<dbReference type="EMBL" id="AF095897">
    <property type="protein sequence ID" value="AAC64188.1"/>
    <property type="molecule type" value="mRNA"/>
</dbReference>
<dbReference type="EMBL" id="AF057711">
    <property type="protein sequence ID" value="AAC62935.1"/>
    <property type="molecule type" value="mRNA"/>
</dbReference>
<dbReference type="EMBL" id="AF195024">
    <property type="protein sequence ID" value="AAF19817.1"/>
    <property type="molecule type" value="mRNA"/>
</dbReference>
<dbReference type="EMBL" id="AF195025">
    <property type="protein sequence ID" value="AAF19818.1"/>
    <property type="molecule type" value="mRNA"/>
</dbReference>
<dbReference type="EMBL" id="AK313926">
    <property type="protein sequence ID" value="BAG36647.1"/>
    <property type="molecule type" value="mRNA"/>
</dbReference>
<dbReference type="EMBL" id="AB209421">
    <property type="protein sequence ID" value="BAD92658.1"/>
    <property type="status" value="ALT_INIT"/>
    <property type="molecule type" value="mRNA"/>
</dbReference>
<dbReference type="EMBL" id="CH471173">
    <property type="protein sequence ID" value="EAW54052.1"/>
    <property type="molecule type" value="Genomic_DNA"/>
</dbReference>
<dbReference type="CCDS" id="CCDS5914.1">
    <molecule id="Q9UHC3-2"/>
</dbReference>
<dbReference type="CCDS" id="CCDS5915.1">
    <molecule id="Q9UHC3-3"/>
</dbReference>
<dbReference type="CCDS" id="CCDS5916.1">
    <molecule id="Q9UHC3-1"/>
</dbReference>
<dbReference type="PIR" id="JE0091">
    <property type="entry name" value="JE0091"/>
</dbReference>
<dbReference type="RefSeq" id="NP_004760.1">
    <molecule id="Q9UHC3-1"/>
    <property type="nucleotide sequence ID" value="NM_004769.4"/>
</dbReference>
<dbReference type="RefSeq" id="NP_064717.1">
    <molecule id="Q9UHC3-3"/>
    <property type="nucleotide sequence ID" value="NM_020321.3"/>
</dbReference>
<dbReference type="RefSeq" id="NP_064718.1">
    <molecule id="Q9UHC3-2"/>
    <property type="nucleotide sequence ID" value="NM_020322.3"/>
</dbReference>
<dbReference type="SMR" id="Q9UHC3"/>
<dbReference type="BioGRID" id="114723">
    <property type="interactions" value="7"/>
</dbReference>
<dbReference type="FunCoup" id="Q9UHC3">
    <property type="interactions" value="355"/>
</dbReference>
<dbReference type="STRING" id="9606.ENSP00000297512"/>
<dbReference type="BindingDB" id="Q9UHC3"/>
<dbReference type="ChEMBL" id="CHEMBL5368"/>
<dbReference type="DrugBank" id="DB08838">
    <property type="generic name" value="Agmatine"/>
</dbReference>
<dbReference type="DrugCentral" id="Q9UHC3"/>
<dbReference type="GuidetoPHARMACOLOGY" id="686"/>
<dbReference type="GlyCosmos" id="Q9UHC3">
    <property type="glycosylation" value="2 sites, No reported glycans"/>
</dbReference>
<dbReference type="GlyGen" id="Q9UHC3">
    <property type="glycosylation" value="4 sites, 1 O-linked glycan (1 site)"/>
</dbReference>
<dbReference type="iPTMnet" id="Q9UHC3"/>
<dbReference type="PhosphoSitePlus" id="Q9UHC3"/>
<dbReference type="BioMuta" id="ASIC3"/>
<dbReference type="DMDM" id="82582992"/>
<dbReference type="MassIVE" id="Q9UHC3"/>
<dbReference type="PaxDb" id="9606-ENSP00000297512"/>
<dbReference type="ProteomicsDB" id="84310">
    <molecule id="Q9UHC3-4"/>
</dbReference>
<dbReference type="Antibodypedia" id="18677">
    <property type="antibodies" value="187 antibodies from 28 providers"/>
</dbReference>
<dbReference type="DNASU" id="9311"/>
<dbReference type="Ensembl" id="ENST00000297512.12">
    <molecule id="Q9UHC3-3"/>
    <property type="protein sequence ID" value="ENSP00000297512.8"/>
    <property type="gene ID" value="ENSG00000213199.8"/>
</dbReference>
<dbReference type="Ensembl" id="ENST00000349064.10">
    <molecule id="Q9UHC3-1"/>
    <property type="protein sequence ID" value="ENSP00000344838.5"/>
    <property type="gene ID" value="ENSG00000213199.8"/>
</dbReference>
<dbReference type="Ensembl" id="ENST00000357922.8">
    <molecule id="Q9UHC3-2"/>
    <property type="protein sequence ID" value="ENSP00000350600.4"/>
    <property type="gene ID" value="ENSG00000213199.8"/>
</dbReference>
<dbReference type="Ensembl" id="ENST00000377904.8">
    <molecule id="Q9UHC3-4"/>
    <property type="protein sequence ID" value="ENSP00000367136.4"/>
    <property type="gene ID" value="ENSG00000213199.8"/>
</dbReference>
<dbReference type="Ensembl" id="ENST00000468325.5">
    <molecule id="Q9UHC3-4"/>
    <property type="protein sequence ID" value="ENSP00000418605.1"/>
    <property type="gene ID" value="ENSG00000213199.8"/>
</dbReference>
<dbReference type="GeneID" id="9311"/>
<dbReference type="KEGG" id="hsa:9311"/>
<dbReference type="MANE-Select" id="ENST00000349064.10">
    <property type="protein sequence ID" value="ENSP00000344838.5"/>
    <property type="RefSeq nucleotide sequence ID" value="NM_004769.4"/>
    <property type="RefSeq protein sequence ID" value="NP_004760.1"/>
</dbReference>
<dbReference type="UCSC" id="uc003win.4">
    <molecule id="Q9UHC3-1"/>
    <property type="organism name" value="human"/>
</dbReference>
<dbReference type="AGR" id="HGNC:101"/>
<dbReference type="CTD" id="9311"/>
<dbReference type="DisGeNET" id="9311"/>
<dbReference type="GeneCards" id="ASIC3"/>
<dbReference type="HGNC" id="HGNC:101">
    <property type="gene designation" value="ASIC3"/>
</dbReference>
<dbReference type="HPA" id="ENSG00000213199">
    <property type="expression patterns" value="Tissue enhanced (brain)"/>
</dbReference>
<dbReference type="MIM" id="611741">
    <property type="type" value="gene"/>
</dbReference>
<dbReference type="neXtProt" id="NX_Q9UHC3"/>
<dbReference type="OpenTargets" id="ENSG00000213199"/>
<dbReference type="PharmGKB" id="PA24435"/>
<dbReference type="VEuPathDB" id="HostDB:ENSG00000213199"/>
<dbReference type="eggNOG" id="KOG4294">
    <property type="taxonomic scope" value="Eukaryota"/>
</dbReference>
<dbReference type="GeneTree" id="ENSGT00940000162081"/>
<dbReference type="HOGENOM" id="CLU_020415_1_3_1"/>
<dbReference type="InParanoid" id="Q9UHC3"/>
<dbReference type="OMA" id="GQFHHVT"/>
<dbReference type="OrthoDB" id="6021021at2759"/>
<dbReference type="PAN-GO" id="Q9UHC3">
    <property type="GO annotations" value="3 GO annotations based on evolutionary models"/>
</dbReference>
<dbReference type="PhylomeDB" id="Q9UHC3"/>
<dbReference type="TreeFam" id="TF330663"/>
<dbReference type="PathwayCommons" id="Q9UHC3"/>
<dbReference type="Reactome" id="R-HSA-2672351">
    <property type="pathway name" value="Stimuli-sensing channels"/>
</dbReference>
<dbReference type="SignaLink" id="Q9UHC3"/>
<dbReference type="BioGRID-ORCS" id="9311">
    <property type="hits" value="10 hits in 1156 CRISPR screens"/>
</dbReference>
<dbReference type="ChiTaRS" id="ASIC3">
    <property type="organism name" value="human"/>
</dbReference>
<dbReference type="GeneWiki" id="ACCN3"/>
<dbReference type="GenomeRNAi" id="9311"/>
<dbReference type="Pharos" id="Q9UHC3">
    <property type="development level" value="Tchem"/>
</dbReference>
<dbReference type="PRO" id="PR:Q9UHC3"/>
<dbReference type="Proteomes" id="UP000005640">
    <property type="component" value="Chromosome 7"/>
</dbReference>
<dbReference type="RNAct" id="Q9UHC3">
    <property type="molecule type" value="protein"/>
</dbReference>
<dbReference type="Bgee" id="ENSG00000213199">
    <property type="expression patterns" value="Expressed in right hemisphere of cerebellum and 108 other cell types or tissues"/>
</dbReference>
<dbReference type="ExpressionAtlas" id="Q9UHC3">
    <property type="expression patterns" value="baseline and differential"/>
</dbReference>
<dbReference type="GO" id="GO:0005737">
    <property type="term" value="C:cytoplasm"/>
    <property type="evidence" value="ECO:0007669"/>
    <property type="project" value="UniProtKB-SubCell"/>
</dbReference>
<dbReference type="GO" id="GO:0005886">
    <property type="term" value="C:plasma membrane"/>
    <property type="evidence" value="ECO:0000314"/>
    <property type="project" value="UniProtKB"/>
</dbReference>
<dbReference type="GO" id="GO:0042931">
    <property type="term" value="F:enterobactin transmembrane transporter activity"/>
    <property type="evidence" value="ECO:0007669"/>
    <property type="project" value="Ensembl"/>
</dbReference>
<dbReference type="GO" id="GO:0015280">
    <property type="term" value="F:ligand-gated sodium channel activity"/>
    <property type="evidence" value="ECO:0000318"/>
    <property type="project" value="GO_Central"/>
</dbReference>
<dbReference type="GO" id="GO:0160128">
    <property type="term" value="F:pH-gated monoatomic ion channel activity"/>
    <property type="evidence" value="ECO:0000314"/>
    <property type="project" value="UniProtKB"/>
</dbReference>
<dbReference type="GO" id="GO:0160125">
    <property type="term" value="F:pH-gated sodium channel activity"/>
    <property type="evidence" value="ECO:0000314"/>
    <property type="project" value="UniProtKB"/>
</dbReference>
<dbReference type="GO" id="GO:0005272">
    <property type="term" value="F:sodium channel activity"/>
    <property type="evidence" value="ECO:0000304"/>
    <property type="project" value="ProtInc"/>
</dbReference>
<dbReference type="GO" id="GO:0050968">
    <property type="term" value="P:detection of chemical stimulus involved in sensory perception of pain"/>
    <property type="evidence" value="ECO:0000250"/>
    <property type="project" value="UniProtKB"/>
</dbReference>
<dbReference type="GO" id="GO:0050966">
    <property type="term" value="P:detection of mechanical stimulus involved in sensory perception of pain"/>
    <property type="evidence" value="ECO:0007669"/>
    <property type="project" value="Ensembl"/>
</dbReference>
<dbReference type="GO" id="GO:0050965">
    <property type="term" value="P:detection of temperature stimulus involved in sensory perception of pain"/>
    <property type="evidence" value="ECO:0007669"/>
    <property type="project" value="Ensembl"/>
</dbReference>
<dbReference type="GO" id="GO:0051899">
    <property type="term" value="P:membrane depolarization"/>
    <property type="evidence" value="ECO:0000314"/>
    <property type="project" value="UniProtKB"/>
</dbReference>
<dbReference type="GO" id="GO:0010447">
    <property type="term" value="P:response to acidic pH"/>
    <property type="evidence" value="ECO:0007669"/>
    <property type="project" value="Ensembl"/>
</dbReference>
<dbReference type="GO" id="GO:0009408">
    <property type="term" value="P:response to heat"/>
    <property type="evidence" value="ECO:0007669"/>
    <property type="project" value="Ensembl"/>
</dbReference>
<dbReference type="GO" id="GO:0050915">
    <property type="term" value="P:sensory perception of sour taste"/>
    <property type="evidence" value="ECO:0000315"/>
    <property type="project" value="UniProtKB"/>
</dbReference>
<dbReference type="GO" id="GO:0035725">
    <property type="term" value="P:sodium ion transmembrane transport"/>
    <property type="evidence" value="ECO:0000318"/>
    <property type="project" value="GO_Central"/>
</dbReference>
<dbReference type="FunFam" id="1.10.287.770:FF:000001">
    <property type="entry name" value="Acid-sensing ion channel subunit 1"/>
    <property type="match status" value="1"/>
</dbReference>
<dbReference type="Gene3D" id="1.10.3590.10">
    <property type="entry name" value="acid-sensing ion channel 1 domain"/>
    <property type="match status" value="2"/>
</dbReference>
<dbReference type="Gene3D" id="1.10.287.820">
    <property type="entry name" value="Acid-sensing ion channel domain"/>
    <property type="match status" value="1"/>
</dbReference>
<dbReference type="Gene3D" id="1.10.287.770">
    <property type="entry name" value="YojJ-like"/>
    <property type="match status" value="1"/>
</dbReference>
<dbReference type="InterPro" id="IPR001873">
    <property type="entry name" value="ENaC"/>
</dbReference>
<dbReference type="InterPro" id="IPR004724">
    <property type="entry name" value="ENaC_chordates"/>
</dbReference>
<dbReference type="InterPro" id="IPR020903">
    <property type="entry name" value="ENaC_CS"/>
</dbReference>
<dbReference type="NCBIfam" id="TIGR00859">
    <property type="entry name" value="ENaC"/>
    <property type="match status" value="1"/>
</dbReference>
<dbReference type="PANTHER" id="PTHR11690:SF228">
    <property type="entry name" value="ACID-SENSING ION CHANNEL 3"/>
    <property type="match status" value="1"/>
</dbReference>
<dbReference type="PANTHER" id="PTHR11690">
    <property type="entry name" value="AMILORIDE-SENSITIVE SODIUM CHANNEL-RELATED"/>
    <property type="match status" value="1"/>
</dbReference>
<dbReference type="Pfam" id="PF00858">
    <property type="entry name" value="ASC"/>
    <property type="match status" value="1"/>
</dbReference>
<dbReference type="PRINTS" id="PR01078">
    <property type="entry name" value="AMINACHANNEL"/>
</dbReference>
<dbReference type="PROSITE" id="PS01206">
    <property type="entry name" value="ASC"/>
    <property type="match status" value="1"/>
</dbReference>
<reference key="1">
    <citation type="journal article" date="1998" name="Biochem. Biophys. Res. Commun.">
        <title>Molecular cloning of a DEG/ENaC sodium channel cDNA from human testis.</title>
        <authorList>
            <person name="Ishibashi K."/>
            <person name="Marumo F."/>
        </authorList>
    </citation>
    <scope>NUCLEOTIDE SEQUENCE [MRNA] (ISOFORM 1)</scope>
    <scope>TISSUE SPECIFICITY</scope>
    <source>
        <tissue>Testis</tissue>
    </source>
</reference>
<reference key="2">
    <citation type="journal article" date="1998" name="FEBS Lett.">
        <title>Identification, functional expression and chromosomal localisation of a sustained human proton-gated cation channel.</title>
        <authorList>
            <person name="de Weille J.R."/>
            <person name="Bassilana F."/>
            <person name="Lazdunski M."/>
            <person name="Waldmann R."/>
        </authorList>
    </citation>
    <scope>NUCLEOTIDE SEQUENCE [MRNA] (ISOFORM 1)</scope>
    <scope>FUNCTION</scope>
    <scope>TRANSPORTER ACTIVITY</scope>
    <scope>ACTIVITY REGULATION</scope>
    <scope>SUBCELLULAR LOCATION</scope>
    <source>
        <tissue>Embryo</tissue>
    </source>
</reference>
<reference key="3">
    <citation type="journal article" date="1999" name="J. Neurochem.">
        <title>Molecular cloning and regional distribution of a human proton receptor subunit with biphasic functional properties.</title>
        <authorList>
            <person name="Babinski K."/>
            <person name="Le K.-T."/>
            <person name="Seguela P."/>
        </authorList>
    </citation>
    <scope>NUCLEOTIDE SEQUENCE [MRNA] (ISOFORM 1)</scope>
    <scope>FUNCTION</scope>
    <scope>TRANSPORTER ACTIVITY</scope>
    <scope>ACTIVITY REGULATION</scope>
    <scope>SUBCELLULAR LOCATION</scope>
    <scope>TISSUE SPECIFICITY</scope>
    <scope>DEVELOPMENTAL STAGE</scope>
    <source>
        <tissue>Fetal brain</tissue>
    </source>
</reference>
<reference key="4">
    <citation type="submission" date="1999-10" db="EMBL/GenBank/DDBJ databases">
        <title>ASIC3b and ASIC3c, new modulatory subunits of the acid sensing ion channel family.</title>
        <authorList>
            <person name="Renard S."/>
            <person name="Besnard F."/>
            <person name="Partiseti M."/>
            <person name="Graham D."/>
        </authorList>
    </citation>
    <scope>NUCLEOTIDE SEQUENCE [MRNA] (ISOFORMS 2 AND 3)</scope>
</reference>
<reference key="5">
    <citation type="journal article" date="2004" name="Nat. Genet.">
        <title>Complete sequencing and characterization of 21,243 full-length human cDNAs.</title>
        <authorList>
            <person name="Ota T."/>
            <person name="Suzuki Y."/>
            <person name="Nishikawa T."/>
            <person name="Otsuki T."/>
            <person name="Sugiyama T."/>
            <person name="Irie R."/>
            <person name="Wakamatsu A."/>
            <person name="Hayashi K."/>
            <person name="Sato H."/>
            <person name="Nagai K."/>
            <person name="Kimura K."/>
            <person name="Makita H."/>
            <person name="Sekine M."/>
            <person name="Obayashi M."/>
            <person name="Nishi T."/>
            <person name="Shibahara T."/>
            <person name="Tanaka T."/>
            <person name="Ishii S."/>
            <person name="Yamamoto J."/>
            <person name="Saito K."/>
            <person name="Kawai Y."/>
            <person name="Isono Y."/>
            <person name="Nakamura Y."/>
            <person name="Nagahari K."/>
            <person name="Murakami K."/>
            <person name="Yasuda T."/>
            <person name="Iwayanagi T."/>
            <person name="Wagatsuma M."/>
            <person name="Shiratori A."/>
            <person name="Sudo H."/>
            <person name="Hosoiri T."/>
            <person name="Kaku Y."/>
            <person name="Kodaira H."/>
            <person name="Kondo H."/>
            <person name="Sugawara M."/>
            <person name="Takahashi M."/>
            <person name="Kanda K."/>
            <person name="Yokoi T."/>
            <person name="Furuya T."/>
            <person name="Kikkawa E."/>
            <person name="Omura Y."/>
            <person name="Abe K."/>
            <person name="Kamihara K."/>
            <person name="Katsuta N."/>
            <person name="Sato K."/>
            <person name="Tanikawa M."/>
            <person name="Yamazaki M."/>
            <person name="Ninomiya K."/>
            <person name="Ishibashi T."/>
            <person name="Yamashita H."/>
            <person name="Murakawa K."/>
            <person name="Fujimori K."/>
            <person name="Tanai H."/>
            <person name="Kimata M."/>
            <person name="Watanabe M."/>
            <person name="Hiraoka S."/>
            <person name="Chiba Y."/>
            <person name="Ishida S."/>
            <person name="Ono Y."/>
            <person name="Takiguchi S."/>
            <person name="Watanabe S."/>
            <person name="Yosida M."/>
            <person name="Hotuta T."/>
            <person name="Kusano J."/>
            <person name="Kanehori K."/>
            <person name="Takahashi-Fujii A."/>
            <person name="Hara H."/>
            <person name="Tanase T.-O."/>
            <person name="Nomura Y."/>
            <person name="Togiya S."/>
            <person name="Komai F."/>
            <person name="Hara R."/>
            <person name="Takeuchi K."/>
            <person name="Arita M."/>
            <person name="Imose N."/>
            <person name="Musashino K."/>
            <person name="Yuuki H."/>
            <person name="Oshima A."/>
            <person name="Sasaki N."/>
            <person name="Aotsuka S."/>
            <person name="Yoshikawa Y."/>
            <person name="Matsunawa H."/>
            <person name="Ichihara T."/>
            <person name="Shiohata N."/>
            <person name="Sano S."/>
            <person name="Moriya S."/>
            <person name="Momiyama H."/>
            <person name="Satoh N."/>
            <person name="Takami S."/>
            <person name="Terashima Y."/>
            <person name="Suzuki O."/>
            <person name="Nakagawa S."/>
            <person name="Senoh A."/>
            <person name="Mizoguchi H."/>
            <person name="Goto Y."/>
            <person name="Shimizu F."/>
            <person name="Wakebe H."/>
            <person name="Hishigaki H."/>
            <person name="Watanabe T."/>
            <person name="Sugiyama A."/>
            <person name="Takemoto M."/>
            <person name="Kawakami B."/>
            <person name="Yamazaki M."/>
            <person name="Watanabe K."/>
            <person name="Kumagai A."/>
            <person name="Itakura S."/>
            <person name="Fukuzumi Y."/>
            <person name="Fujimori Y."/>
            <person name="Komiyama M."/>
            <person name="Tashiro H."/>
            <person name="Tanigami A."/>
            <person name="Fujiwara T."/>
            <person name="Ono T."/>
            <person name="Yamada K."/>
            <person name="Fujii Y."/>
            <person name="Ozaki K."/>
            <person name="Hirao M."/>
            <person name="Ohmori Y."/>
            <person name="Kawabata A."/>
            <person name="Hikiji T."/>
            <person name="Kobatake N."/>
            <person name="Inagaki H."/>
            <person name="Ikema Y."/>
            <person name="Okamoto S."/>
            <person name="Okitani R."/>
            <person name="Kawakami T."/>
            <person name="Noguchi S."/>
            <person name="Itoh T."/>
            <person name="Shigeta K."/>
            <person name="Senba T."/>
            <person name="Matsumura K."/>
            <person name="Nakajima Y."/>
            <person name="Mizuno T."/>
            <person name="Morinaga M."/>
            <person name="Sasaki M."/>
            <person name="Togashi T."/>
            <person name="Oyama M."/>
            <person name="Hata H."/>
            <person name="Watanabe M."/>
            <person name="Komatsu T."/>
            <person name="Mizushima-Sugano J."/>
            <person name="Satoh T."/>
            <person name="Shirai Y."/>
            <person name="Takahashi Y."/>
            <person name="Nakagawa K."/>
            <person name="Okumura K."/>
            <person name="Nagase T."/>
            <person name="Nomura N."/>
            <person name="Kikuchi H."/>
            <person name="Masuho Y."/>
            <person name="Yamashita R."/>
            <person name="Nakai K."/>
            <person name="Yada T."/>
            <person name="Nakamura Y."/>
            <person name="Ohara O."/>
            <person name="Isogai T."/>
            <person name="Sugano S."/>
        </authorList>
    </citation>
    <scope>NUCLEOTIDE SEQUENCE [LARGE SCALE MRNA] (ISOFORM 2)</scope>
    <source>
        <tissue>Brain</tissue>
    </source>
</reference>
<reference key="6">
    <citation type="submission" date="2005-03" db="EMBL/GenBank/DDBJ databases">
        <authorList>
            <person name="Totoki Y."/>
            <person name="Toyoda A."/>
            <person name="Takeda T."/>
            <person name="Sakaki Y."/>
            <person name="Tanaka A."/>
            <person name="Yokoyama S."/>
            <person name="Ohara O."/>
            <person name="Nagase T."/>
            <person name="Kikuno R.F."/>
        </authorList>
    </citation>
    <scope>NUCLEOTIDE SEQUENCE [LARGE SCALE MRNA] (ISOFORM 4)</scope>
    <source>
        <tissue>Brain</tissue>
    </source>
</reference>
<reference key="7">
    <citation type="submission" date="2005-09" db="EMBL/GenBank/DDBJ databases">
        <authorList>
            <person name="Mural R.J."/>
            <person name="Istrail S."/>
            <person name="Sutton G.G."/>
            <person name="Florea L."/>
            <person name="Halpern A.L."/>
            <person name="Mobarry C.M."/>
            <person name="Lippert R."/>
            <person name="Walenz B."/>
            <person name="Shatkay H."/>
            <person name="Dew I."/>
            <person name="Miller J.R."/>
            <person name="Flanigan M.J."/>
            <person name="Edwards N.J."/>
            <person name="Bolanos R."/>
            <person name="Fasulo D."/>
            <person name="Halldorsson B.V."/>
            <person name="Hannenhalli S."/>
            <person name="Turner R."/>
            <person name="Yooseph S."/>
            <person name="Lu F."/>
            <person name="Nusskern D.R."/>
            <person name="Shue B.C."/>
            <person name="Zheng X.H."/>
            <person name="Zhong F."/>
            <person name="Delcher A.L."/>
            <person name="Huson D.H."/>
            <person name="Kravitz S.A."/>
            <person name="Mouchard L."/>
            <person name="Reinert K."/>
            <person name="Remington K.A."/>
            <person name="Clark A.G."/>
            <person name="Waterman M.S."/>
            <person name="Eichler E.E."/>
            <person name="Adams M.D."/>
            <person name="Hunkapiller M.W."/>
            <person name="Myers E.W."/>
            <person name="Venter J.C."/>
        </authorList>
    </citation>
    <scope>NUCLEOTIDE SEQUENCE [LARGE SCALE GENOMIC DNA]</scope>
</reference>
<reference key="8">
    <citation type="journal article" date="2000" name="J. Biol. Chem.">
        <title>Mammalian ASIC2a and ASIC3 subunits co-assemble into heteromeric proton-gated channels sensitive to Gd3+.</title>
        <authorList>
            <person name="Babinski K."/>
            <person name="Catarsi S."/>
            <person name="Biagini G."/>
            <person name="Seguela P."/>
        </authorList>
    </citation>
    <scope>FUNCTION</scope>
    <scope>TRANSPORTER ACTIVITY</scope>
    <scope>ACTIVITY REGULATION</scope>
    <scope>SUBUNIT</scope>
    <scope>SUBCELLULAR LOCATION</scope>
</reference>
<reference key="9">
    <citation type="journal article" date="2001" name="Neuropharmacology">
        <title>Selective modulation of heteromeric ASIC proton-gated channels by neuropeptide FF.</title>
        <authorList>
            <person name="Catarsi S."/>
            <person name="Babinski K."/>
            <person name="Seguela P."/>
        </authorList>
    </citation>
    <scope>FUNCTION</scope>
    <scope>ACTIVITY REGULATION BY NPFF</scope>
    <scope>SUBUNIT</scope>
</reference>
<reference key="10">
    <citation type="journal article" date="2004" name="EMBO J.">
        <title>A new sea anemone peptide, APETx2, inhibits ASIC3, a major acid-sensitive channel in sensory neurons.</title>
        <authorList>
            <person name="Diochot S."/>
            <person name="Baron A."/>
            <person name="Rash L.D."/>
            <person name="Deval E."/>
            <person name="Escoubas P."/>
            <person name="Scarzello S."/>
            <person name="Salinas M."/>
            <person name="Lazdunski M."/>
        </authorList>
    </citation>
    <scope>ACTIVITY REGULATION BY APETX2 TOXIN</scope>
</reference>
<reference key="11">
    <citation type="journal article" date="2004" name="J. Biol. Chem.">
        <title>PSD-95 and Lin-7b interact with acid-sensing ion channel-3 and have opposite effects on H+- gated current.</title>
        <authorList>
            <person name="Hruska-Hageman A.M."/>
            <person name="Benson C.J."/>
            <person name="Leonard A.S."/>
            <person name="Price M.P."/>
            <person name="Welsh M.J."/>
        </authorList>
    </citation>
    <scope>INTERACTION WITH GOPC; LIN7B AND MAGI1</scope>
    <scope>SUBCELLULAR LOCATION</scope>
    <scope>DOMAIN</scope>
    <scope>MOTIF</scope>
    <scope>TOPOLOGY</scope>
    <scope>MUTAGENESIS OF VAL-528; THR-529; GLN-530 AND LEU-531</scope>
</reference>
<gene>
    <name evidence="23" type="primary">ASIC3</name>
    <name evidence="23" type="synonym">ACCN3</name>
    <name evidence="13" type="synonym">DRASIC</name>
    <name type="synonym">SLNAC1</name>
    <name evidence="15" type="synonym">TNAC1</name>
</gene>
<proteinExistence type="evidence at protein level"/>
<comment type="function">
    <text evidence="1 3 6 7 11 12">Forms pH-gated heterotrimeric sodium channels that act as postsynaptic excitatory receptors in the nervous system (PubMed:10842183, PubMed:11587714, PubMed:9744806, PubMed:9886053). Upon extracellular acidification, these channels generate a biphasic current with a fast inactivating and a slow sustained phase (PubMed:10842183, PubMed:9744806, PubMed:9886053). ASIC3 is more sensitive to protons and gates between closed, open, and desensitized states faster than other ASICs (By similarity). Displays high selectivity for sodium ions but can also permit the permeation of other cations (PubMed:9744806, PubMed:9886053). As a neuronal acid sensor, probably contributes to mechanoreception, acid nociception, and heat nociception (By similarity). By forming heterotrimeric channels with ASIC2, generates a biphasic current with a fast inactivating and a slow sustained phase, which in sensory neurons is proposed to mediate the pain induced by acidosis that occurs in ischemic, damaged or inflamed tissues (By similarity).</text>
</comment>
<comment type="catalytic activity">
    <reaction evidence="6 11 12">
        <text>Na(+)(in) = Na(+)(out)</text>
        <dbReference type="Rhea" id="RHEA:34963"/>
        <dbReference type="ChEBI" id="CHEBI:29101"/>
    </reaction>
</comment>
<comment type="catalytic activity">
    <reaction evidence="11">
        <text>K(+)(in) = K(+)(out)</text>
        <dbReference type="Rhea" id="RHEA:29463"/>
        <dbReference type="ChEBI" id="CHEBI:29103"/>
    </reaction>
</comment>
<comment type="catalytic activity">
    <reaction evidence="1">
        <text>Ca(2+)(in) = Ca(2+)(out)</text>
        <dbReference type="Rhea" id="RHEA:29671"/>
        <dbReference type="ChEBI" id="CHEBI:29108"/>
    </reaction>
</comment>
<comment type="activity regulation">
    <text evidence="6 7 8 11 12">Inhibited by the diuretic drug amiloride (PubMed:10842183, PubMed:9744806, PubMed:9886053). Inhibited by the diuretic drug triamterene (PubMed:9744806). Potentiated by the vertebrate neuropeptide FF (NPFF) and the related FMRFamide (PubMed:11587714). Specifically and reversibly inhibited by the a sea anemone toxin APETx2 (PubMed:15044953).</text>
</comment>
<comment type="subunit">
    <text evidence="1 3 6 7 9">Can form homotrimeric channels (By similarity). Heterotrimer; forms functional heterotrimers producing channel with different properties (PubMed:11587714). Forms heterotrimers with ASIC2; gives rise to a biphasic current with a sustained current which discriminates poorly between Na(+) and K(+) (PubMed:10842183, PubMed:11587714). Interacts with STOM; inhibits ASIC3 acid-evoked current (By similarity). Interacts with LIN7B (via PDZ domain); increases ASIC3 expression at the plasma membrane (PubMed:15317815). Interacts with MAGI1 (via PDZ domain); probably regulates ASIC3 (PubMed:15317815). Interacts with GOPC (via PDZ domain); probably regulates ASIC3 (PubMed:15317815). Interacts with DLG4 (via PDZ domain); reduces ASIC3 expression at the plasma membrane (By similarity).</text>
</comment>
<comment type="subcellular location">
    <subcellularLocation>
        <location evidence="6 9 11 12">Cell membrane</location>
        <topology evidence="4">Multi-pass membrane protein</topology>
    </subcellularLocation>
    <subcellularLocation>
        <location evidence="3">Cytoplasm</location>
    </subcellularLocation>
    <text evidence="1 3">Preferentially expressed at the plasma membrane of the soma and cellular processes of neurons (By similarity). In part cytoplasmic in cochlea cells (By similarity). Localized in specialized sensory nerve endings (By similarity).</text>
</comment>
<comment type="alternative products">
    <event type="alternative splicing"/>
    <isoform>
        <id>Q9UHC3-1</id>
        <name>1</name>
        <sequence type="displayed"/>
    </isoform>
    <isoform>
        <id>Q9UHC3-2</id>
        <name>2</name>
        <name evidence="18">ASIC3b</name>
        <sequence type="described" ref="VSP_015602"/>
    </isoform>
    <isoform>
        <id>Q9UHC3-3</id>
        <name>3</name>
        <name evidence="18">ASIC3c</name>
        <sequence type="described" ref="VSP_015603"/>
    </isoform>
    <isoform>
        <id>Q9UHC3-4</id>
        <name>4</name>
        <name>c</name>
        <sequence type="described" ref="VSP_015600 VSP_015601"/>
    </isoform>
</comment>
<comment type="tissue specificity">
    <text evidence="10 12">Expressed by sensory neurons. Strongly expressed in brain, spinal cord, lung, lymph nodes, kidney, pituitary, heart and testis.</text>
</comment>
<comment type="developmental stage">
    <text evidence="12">Expressed in fetal tissues, expression increases in lung and kidney adult tissues.</text>
</comment>
<comment type="domain">
    <text evidence="9">The PDZ-binding motif mediates the interaction with PDZ-domain containing proteins including DLG4, GOPC, MAGI1 and LIN7A.</text>
</comment>
<comment type="similarity">
    <text evidence="20">Belongs to the amiloride-sensitive sodium channel (TC 1.A.6) family. ASIC3 subfamily.</text>
</comment>
<comment type="sequence caution" evidence="20">
    <conflict type="frameshift">
        <sequence resource="EMBL-CDS" id="BAA25897"/>
    </conflict>
</comment>
<comment type="sequence caution" evidence="20">
    <conflict type="erroneous initiation">
        <sequence resource="EMBL-CDS" id="BAD92658"/>
    </conflict>
    <text>Extended N-terminus.</text>
</comment>
<organism>
    <name type="scientific">Homo sapiens</name>
    <name type="common">Human</name>
    <dbReference type="NCBI Taxonomy" id="9606"/>
    <lineage>
        <taxon>Eukaryota</taxon>
        <taxon>Metazoa</taxon>
        <taxon>Chordata</taxon>
        <taxon>Craniata</taxon>
        <taxon>Vertebrata</taxon>
        <taxon>Euteleostomi</taxon>
        <taxon>Mammalia</taxon>
        <taxon>Eutheria</taxon>
        <taxon>Euarchontoglires</taxon>
        <taxon>Primates</taxon>
        <taxon>Haplorrhini</taxon>
        <taxon>Catarrhini</taxon>
        <taxon>Hominidae</taxon>
        <taxon>Homo</taxon>
    </lineage>
</organism>
<keyword id="KW-0025">Alternative splicing</keyword>
<keyword id="KW-1003">Cell membrane</keyword>
<keyword id="KW-0963">Cytoplasm</keyword>
<keyword id="KW-1015">Disulfide bond</keyword>
<keyword id="KW-0325">Glycoprotein</keyword>
<keyword id="KW-0407">Ion channel</keyword>
<keyword id="KW-0406">Ion transport</keyword>
<keyword id="KW-0472">Membrane</keyword>
<keyword id="KW-0597">Phosphoprotein</keyword>
<keyword id="KW-1185">Reference proteome</keyword>
<keyword id="KW-0915">Sodium</keyword>
<keyword id="KW-0894">Sodium channel</keyword>
<keyword id="KW-0739">Sodium transport</keyword>
<keyword id="KW-0812">Transmembrane</keyword>
<keyword id="KW-1133">Transmembrane helix</keyword>
<keyword id="KW-0813">Transport</keyword>
<accession>Q9UHC3</accession>
<accession>B2R9V0</accession>
<accession>O60263</accession>
<accession>O75906</accession>
<accession>Q59FN9</accession>
<accession>Q9UER8</accession>
<accession>Q9UHC4</accession>
<name>ASIC3_HUMAN</name>
<protein>
    <recommendedName>
        <fullName evidence="21">Acid-sensing ion channel 3</fullName>
        <shortName evidence="13">ASIC3</shortName>
        <shortName evidence="16 17">hASIC3</shortName>
    </recommendedName>
    <alternativeName>
        <fullName evidence="23">Amiloride-sensitive cation channel 3</fullName>
    </alternativeName>
    <alternativeName>
        <fullName>Neuronal amiloride-sensitive cation channel 3</fullName>
    </alternativeName>
    <alternativeName>
        <fullName evidence="15">Testis sodium channel 1</fullName>
        <shortName evidence="15">hTNaC1</shortName>
    </alternativeName>
</protein>